<protein>
    <recommendedName>
        <fullName evidence="1">Phosphomethylpyrimidine synthase</fullName>
        <ecNumber evidence="1">4.1.99.17</ecNumber>
    </recommendedName>
    <alternativeName>
        <fullName evidence="1">Hydroxymethylpyrimidine phosphate synthase</fullName>
        <shortName evidence="1">HMP-P synthase</shortName>
        <shortName evidence="1">HMP-phosphate synthase</shortName>
        <shortName evidence="1">HMPP synthase</shortName>
    </alternativeName>
    <alternativeName>
        <fullName evidence="1">Thiamine biosynthesis protein ThiC</fullName>
    </alternativeName>
</protein>
<accession>Q5NR58</accession>
<organism>
    <name type="scientific">Zymomonas mobilis subsp. mobilis (strain ATCC 31821 / ZM4 / CP4)</name>
    <dbReference type="NCBI Taxonomy" id="264203"/>
    <lineage>
        <taxon>Bacteria</taxon>
        <taxon>Pseudomonadati</taxon>
        <taxon>Pseudomonadota</taxon>
        <taxon>Alphaproteobacteria</taxon>
        <taxon>Sphingomonadales</taxon>
        <taxon>Zymomonadaceae</taxon>
        <taxon>Zymomonas</taxon>
    </lineage>
</organism>
<sequence>MADISDQNIPGHVTTGPIRGSRKIYVEGKNGVRVAMREIDLEPSANEQPVRVYDCSGPYTDPNIKIDIAAGLKPLRREWILARGDVESYEGREIKPEDNGQLGPDRSGGVPPFPNVNHHPLRAKAGANVTQMHYAKKGIVTSEMEYIAIRENCGRAQMKEAMIRDGESFGANIPDFITPEFVRDEIAEGRAVIAANINHPEAEPMIIGRNFLVKINANIGNSAVASDVAAEVEKMVWAIRWGADTVMDLSTGRNIHDTREWILRNSPVPIGTVPIYQALEKVNGIAENLTWEVFRDTLIEQAEQGVDYFTIHAGVRLAYIPLTANRITGIVSRGGSIMAKWCLAHHQENFLYTHFEDICEILKRYDIAFSLGDGLRPGCIADANDRAQFAELETLGELTKIAWKHDVQVMIEGPGHVPMHKIKPNMDKELVACHEAPFYTLGPLTTDIAPGYDHITSAIGAAMIGWYGTAMLCYVTPKEHLGLPDRDDVKVGVVTYKLAAHAADLAKGHPTAHFRDNALSRARFEFRWKDQFNLSLDPDTAESFHDQTLPAEGAKAAHFCSMCGPKFCSMKITQEVREFAAQGMEEMSDQFKEKGGEIYLPAAE</sequence>
<proteinExistence type="inferred from homology"/>
<reference key="1">
    <citation type="journal article" date="2005" name="Nat. Biotechnol.">
        <title>The genome sequence of the ethanologenic bacterium Zymomonas mobilis ZM4.</title>
        <authorList>
            <person name="Seo J.-S."/>
            <person name="Chong H."/>
            <person name="Park H.S."/>
            <person name="Yoon K.-O."/>
            <person name="Jung C."/>
            <person name="Kim J.J."/>
            <person name="Hong J.H."/>
            <person name="Kim H."/>
            <person name="Kim J.-H."/>
            <person name="Kil J.-I."/>
            <person name="Park C.J."/>
            <person name="Oh H.-M."/>
            <person name="Lee J.-S."/>
            <person name="Jin S.-J."/>
            <person name="Um H.-W."/>
            <person name="Lee H.-J."/>
            <person name="Oh S.-J."/>
            <person name="Kim J.Y."/>
            <person name="Kang H.L."/>
            <person name="Lee S.Y."/>
            <person name="Lee K.J."/>
            <person name="Kang H.S."/>
        </authorList>
    </citation>
    <scope>NUCLEOTIDE SEQUENCE [LARGE SCALE GENOMIC DNA]</scope>
    <source>
        <strain>ATCC 31821 / ZM4 / CP4</strain>
    </source>
</reference>
<gene>
    <name evidence="1" type="primary">thiC</name>
    <name type="ordered locus">ZMO0172</name>
</gene>
<feature type="chain" id="PRO_0000242323" description="Phosphomethylpyrimidine synthase">
    <location>
        <begin position="1"/>
        <end position="604"/>
    </location>
</feature>
<feature type="binding site" evidence="1">
    <location>
        <position position="218"/>
    </location>
    <ligand>
        <name>substrate</name>
    </ligand>
</feature>
<feature type="binding site" evidence="1">
    <location>
        <position position="247"/>
    </location>
    <ligand>
        <name>substrate</name>
    </ligand>
</feature>
<feature type="binding site" evidence="1">
    <location>
        <position position="276"/>
    </location>
    <ligand>
        <name>substrate</name>
    </ligand>
</feature>
<feature type="binding site" evidence="1">
    <location>
        <position position="312"/>
    </location>
    <ligand>
        <name>substrate</name>
    </ligand>
</feature>
<feature type="binding site" evidence="1">
    <location>
        <begin position="332"/>
        <end position="334"/>
    </location>
    <ligand>
        <name>substrate</name>
    </ligand>
</feature>
<feature type="binding site" evidence="1">
    <location>
        <begin position="373"/>
        <end position="376"/>
    </location>
    <ligand>
        <name>substrate</name>
    </ligand>
</feature>
<feature type="binding site" evidence="1">
    <location>
        <position position="412"/>
    </location>
    <ligand>
        <name>substrate</name>
    </ligand>
</feature>
<feature type="binding site" evidence="1">
    <location>
        <position position="416"/>
    </location>
    <ligand>
        <name>Zn(2+)</name>
        <dbReference type="ChEBI" id="CHEBI:29105"/>
    </ligand>
</feature>
<feature type="binding site" evidence="1">
    <location>
        <position position="439"/>
    </location>
    <ligand>
        <name>substrate</name>
    </ligand>
</feature>
<feature type="binding site" evidence="1">
    <location>
        <position position="480"/>
    </location>
    <ligand>
        <name>Zn(2+)</name>
        <dbReference type="ChEBI" id="CHEBI:29105"/>
    </ligand>
</feature>
<feature type="binding site" evidence="1">
    <location>
        <position position="560"/>
    </location>
    <ligand>
        <name>[4Fe-4S] cluster</name>
        <dbReference type="ChEBI" id="CHEBI:49883"/>
        <note>4Fe-4S-S-AdoMet</note>
    </ligand>
</feature>
<feature type="binding site" evidence="1">
    <location>
        <position position="563"/>
    </location>
    <ligand>
        <name>[4Fe-4S] cluster</name>
        <dbReference type="ChEBI" id="CHEBI:49883"/>
        <note>4Fe-4S-S-AdoMet</note>
    </ligand>
</feature>
<feature type="binding site" evidence="1">
    <location>
        <position position="568"/>
    </location>
    <ligand>
        <name>[4Fe-4S] cluster</name>
        <dbReference type="ChEBI" id="CHEBI:49883"/>
        <note>4Fe-4S-S-AdoMet</note>
    </ligand>
</feature>
<dbReference type="EC" id="4.1.99.17" evidence="1"/>
<dbReference type="EMBL" id="AE008692">
    <property type="protein sequence ID" value="AAV88796.1"/>
    <property type="molecule type" value="Genomic_DNA"/>
</dbReference>
<dbReference type="RefSeq" id="WP_011240127.1">
    <property type="nucleotide sequence ID" value="NZ_CP035711.1"/>
</dbReference>
<dbReference type="SMR" id="Q5NR58"/>
<dbReference type="STRING" id="264203.ZMO0172"/>
<dbReference type="KEGG" id="zmo:ZMO0172"/>
<dbReference type="eggNOG" id="COG0422">
    <property type="taxonomic scope" value="Bacteria"/>
</dbReference>
<dbReference type="HOGENOM" id="CLU_013181_2_1_5"/>
<dbReference type="UniPathway" id="UPA00060"/>
<dbReference type="Proteomes" id="UP000001173">
    <property type="component" value="Chromosome"/>
</dbReference>
<dbReference type="GO" id="GO:0005829">
    <property type="term" value="C:cytosol"/>
    <property type="evidence" value="ECO:0007669"/>
    <property type="project" value="TreeGrafter"/>
</dbReference>
<dbReference type="GO" id="GO:0051539">
    <property type="term" value="F:4 iron, 4 sulfur cluster binding"/>
    <property type="evidence" value="ECO:0007669"/>
    <property type="project" value="UniProtKB-KW"/>
</dbReference>
<dbReference type="GO" id="GO:0016830">
    <property type="term" value="F:carbon-carbon lyase activity"/>
    <property type="evidence" value="ECO:0007669"/>
    <property type="project" value="InterPro"/>
</dbReference>
<dbReference type="GO" id="GO:0008270">
    <property type="term" value="F:zinc ion binding"/>
    <property type="evidence" value="ECO:0007669"/>
    <property type="project" value="UniProtKB-UniRule"/>
</dbReference>
<dbReference type="GO" id="GO:0009228">
    <property type="term" value="P:thiamine biosynthetic process"/>
    <property type="evidence" value="ECO:0007669"/>
    <property type="project" value="UniProtKB-KW"/>
</dbReference>
<dbReference type="GO" id="GO:0009229">
    <property type="term" value="P:thiamine diphosphate biosynthetic process"/>
    <property type="evidence" value="ECO:0007669"/>
    <property type="project" value="UniProtKB-UniRule"/>
</dbReference>
<dbReference type="FunFam" id="3.20.20.540:FF:000001">
    <property type="entry name" value="Phosphomethylpyrimidine synthase"/>
    <property type="match status" value="1"/>
</dbReference>
<dbReference type="Gene3D" id="6.10.250.620">
    <property type="match status" value="1"/>
</dbReference>
<dbReference type="Gene3D" id="3.20.20.540">
    <property type="entry name" value="Radical SAM ThiC family, central domain"/>
    <property type="match status" value="1"/>
</dbReference>
<dbReference type="HAMAP" id="MF_00089">
    <property type="entry name" value="ThiC"/>
    <property type="match status" value="1"/>
</dbReference>
<dbReference type="InterPro" id="IPR037509">
    <property type="entry name" value="ThiC"/>
</dbReference>
<dbReference type="InterPro" id="IPR025747">
    <property type="entry name" value="ThiC-associated_dom"/>
</dbReference>
<dbReference type="InterPro" id="IPR038521">
    <property type="entry name" value="ThiC/Bza_core_dom"/>
</dbReference>
<dbReference type="InterPro" id="IPR002817">
    <property type="entry name" value="ThiC/BzaA/B"/>
</dbReference>
<dbReference type="NCBIfam" id="NF006763">
    <property type="entry name" value="PRK09284.1"/>
    <property type="match status" value="1"/>
</dbReference>
<dbReference type="NCBIfam" id="NF009895">
    <property type="entry name" value="PRK13352.1"/>
    <property type="match status" value="1"/>
</dbReference>
<dbReference type="NCBIfam" id="TIGR00190">
    <property type="entry name" value="thiC"/>
    <property type="match status" value="1"/>
</dbReference>
<dbReference type="PANTHER" id="PTHR30557:SF1">
    <property type="entry name" value="PHOSPHOMETHYLPYRIMIDINE SYNTHASE, CHLOROPLASTIC"/>
    <property type="match status" value="1"/>
</dbReference>
<dbReference type="PANTHER" id="PTHR30557">
    <property type="entry name" value="THIAMINE BIOSYNTHESIS PROTEIN THIC"/>
    <property type="match status" value="1"/>
</dbReference>
<dbReference type="Pfam" id="PF13667">
    <property type="entry name" value="ThiC-associated"/>
    <property type="match status" value="1"/>
</dbReference>
<dbReference type="Pfam" id="PF01964">
    <property type="entry name" value="ThiC_Rad_SAM"/>
    <property type="match status" value="1"/>
</dbReference>
<dbReference type="SFLD" id="SFLDF00407">
    <property type="entry name" value="phosphomethylpyrimidine_syntha"/>
    <property type="match status" value="1"/>
</dbReference>
<dbReference type="SFLD" id="SFLDG01114">
    <property type="entry name" value="phosphomethylpyrimidine_syntha"/>
    <property type="match status" value="1"/>
</dbReference>
<dbReference type="SFLD" id="SFLDS00113">
    <property type="entry name" value="Radical_SAM_Phosphomethylpyrim"/>
    <property type="match status" value="1"/>
</dbReference>
<evidence type="ECO:0000255" key="1">
    <source>
        <dbReference type="HAMAP-Rule" id="MF_00089"/>
    </source>
</evidence>
<comment type="function">
    <text evidence="1">Catalyzes the synthesis of the hydroxymethylpyrimidine phosphate (HMP-P) moiety of thiamine from aminoimidazole ribotide (AIR) in a radical S-adenosyl-L-methionine (SAM)-dependent reaction.</text>
</comment>
<comment type="catalytic activity">
    <reaction evidence="1">
        <text>5-amino-1-(5-phospho-beta-D-ribosyl)imidazole + S-adenosyl-L-methionine = 4-amino-2-methyl-5-(phosphooxymethyl)pyrimidine + CO + 5'-deoxyadenosine + formate + L-methionine + 3 H(+)</text>
        <dbReference type="Rhea" id="RHEA:24840"/>
        <dbReference type="ChEBI" id="CHEBI:15378"/>
        <dbReference type="ChEBI" id="CHEBI:15740"/>
        <dbReference type="ChEBI" id="CHEBI:17245"/>
        <dbReference type="ChEBI" id="CHEBI:17319"/>
        <dbReference type="ChEBI" id="CHEBI:57844"/>
        <dbReference type="ChEBI" id="CHEBI:58354"/>
        <dbReference type="ChEBI" id="CHEBI:59789"/>
        <dbReference type="ChEBI" id="CHEBI:137981"/>
        <dbReference type="EC" id="4.1.99.17"/>
    </reaction>
</comment>
<comment type="cofactor">
    <cofactor evidence="1">
        <name>[4Fe-4S] cluster</name>
        <dbReference type="ChEBI" id="CHEBI:49883"/>
    </cofactor>
    <text evidence="1">Binds 1 [4Fe-4S] cluster per subunit. The cluster is coordinated with 3 cysteines and an exchangeable S-adenosyl-L-methionine.</text>
</comment>
<comment type="pathway">
    <text evidence="1">Cofactor biosynthesis; thiamine diphosphate biosynthesis.</text>
</comment>
<comment type="subunit">
    <text evidence="1">Homodimer.</text>
</comment>
<comment type="similarity">
    <text evidence="1">Belongs to the ThiC family.</text>
</comment>
<name>THIC_ZYMMO</name>
<keyword id="KW-0004">4Fe-4S</keyword>
<keyword id="KW-0408">Iron</keyword>
<keyword id="KW-0411">Iron-sulfur</keyword>
<keyword id="KW-0456">Lyase</keyword>
<keyword id="KW-0479">Metal-binding</keyword>
<keyword id="KW-1185">Reference proteome</keyword>
<keyword id="KW-0949">S-adenosyl-L-methionine</keyword>
<keyword id="KW-0784">Thiamine biosynthesis</keyword>
<keyword id="KW-0862">Zinc</keyword>